<comment type="function">
    <text evidence="1">Allows the formation of correctly charged Asn-tRNA(Asn) or Gln-tRNA(Gln) through the transamidation of misacylated Asp-tRNA(Asn) or Glu-tRNA(Gln) in organisms which lack either or both of asparaginyl-tRNA or glutaminyl-tRNA synthetases. The reaction takes place in the presence of glutamine and ATP through an activated phospho-Asp-tRNA(Asn) or phospho-Glu-tRNA(Gln).</text>
</comment>
<comment type="catalytic activity">
    <reaction evidence="1">
        <text>L-glutamyl-tRNA(Gln) + L-glutamine + ATP + H2O = L-glutaminyl-tRNA(Gln) + L-glutamate + ADP + phosphate + H(+)</text>
        <dbReference type="Rhea" id="RHEA:17521"/>
        <dbReference type="Rhea" id="RHEA-COMP:9681"/>
        <dbReference type="Rhea" id="RHEA-COMP:9684"/>
        <dbReference type="ChEBI" id="CHEBI:15377"/>
        <dbReference type="ChEBI" id="CHEBI:15378"/>
        <dbReference type="ChEBI" id="CHEBI:29985"/>
        <dbReference type="ChEBI" id="CHEBI:30616"/>
        <dbReference type="ChEBI" id="CHEBI:43474"/>
        <dbReference type="ChEBI" id="CHEBI:58359"/>
        <dbReference type="ChEBI" id="CHEBI:78520"/>
        <dbReference type="ChEBI" id="CHEBI:78521"/>
        <dbReference type="ChEBI" id="CHEBI:456216"/>
    </reaction>
</comment>
<comment type="catalytic activity">
    <reaction evidence="1">
        <text>L-aspartyl-tRNA(Asn) + L-glutamine + ATP + H2O = L-asparaginyl-tRNA(Asn) + L-glutamate + ADP + phosphate + 2 H(+)</text>
        <dbReference type="Rhea" id="RHEA:14513"/>
        <dbReference type="Rhea" id="RHEA-COMP:9674"/>
        <dbReference type="Rhea" id="RHEA-COMP:9677"/>
        <dbReference type="ChEBI" id="CHEBI:15377"/>
        <dbReference type="ChEBI" id="CHEBI:15378"/>
        <dbReference type="ChEBI" id="CHEBI:29985"/>
        <dbReference type="ChEBI" id="CHEBI:30616"/>
        <dbReference type="ChEBI" id="CHEBI:43474"/>
        <dbReference type="ChEBI" id="CHEBI:58359"/>
        <dbReference type="ChEBI" id="CHEBI:78515"/>
        <dbReference type="ChEBI" id="CHEBI:78516"/>
        <dbReference type="ChEBI" id="CHEBI:456216"/>
    </reaction>
</comment>
<comment type="subunit">
    <text evidence="1">Heterotrimer of A, B and C subunits.</text>
</comment>
<comment type="similarity">
    <text evidence="1">Belongs to the GatC family.</text>
</comment>
<sequence>MKIEVNNELISRLQNLALVELNDREKERIKRDIKNILDFFDQINKLDLSNVEPLFHPISTGKLRKDEIIKPLSRDEALSNVKRKEDGFIVGPATYGE</sequence>
<reference key="1">
    <citation type="journal article" date="2001" name="DNA Res.">
        <title>Complete genome sequence of an aerobic thermoacidophilic Crenarchaeon, Sulfolobus tokodaii strain7.</title>
        <authorList>
            <person name="Kawarabayasi Y."/>
            <person name="Hino Y."/>
            <person name="Horikawa H."/>
            <person name="Jin-no K."/>
            <person name="Takahashi M."/>
            <person name="Sekine M."/>
            <person name="Baba S."/>
            <person name="Ankai A."/>
            <person name="Kosugi H."/>
            <person name="Hosoyama A."/>
            <person name="Fukui S."/>
            <person name="Nagai Y."/>
            <person name="Nishijima K."/>
            <person name="Otsuka R."/>
            <person name="Nakazawa H."/>
            <person name="Takamiya M."/>
            <person name="Kato Y."/>
            <person name="Yoshizawa T."/>
            <person name="Tanaka T."/>
            <person name="Kudoh Y."/>
            <person name="Yamazaki J."/>
            <person name="Kushida N."/>
            <person name="Oguchi A."/>
            <person name="Aoki K."/>
            <person name="Masuda S."/>
            <person name="Yanagii M."/>
            <person name="Nishimura M."/>
            <person name="Yamagishi A."/>
            <person name="Oshima T."/>
            <person name="Kikuchi H."/>
        </authorList>
    </citation>
    <scope>NUCLEOTIDE SEQUENCE [LARGE SCALE GENOMIC DNA]</scope>
    <source>
        <strain>DSM 16993 / JCM 10545 / NBRC 100140 / 7</strain>
    </source>
</reference>
<gene>
    <name evidence="1" type="primary">gatC</name>
    <name type="ordered locus">STK_12835</name>
    <name type="ORF">STS140</name>
</gene>
<feature type="chain" id="PRO_0000105362" description="Glutamyl-tRNA(Gln) amidotransferase subunit C">
    <location>
        <begin position="1"/>
        <end position="97"/>
    </location>
</feature>
<name>GATC_SULTO</name>
<evidence type="ECO:0000255" key="1">
    <source>
        <dbReference type="HAMAP-Rule" id="MF_00122"/>
    </source>
</evidence>
<keyword id="KW-0067">ATP-binding</keyword>
<keyword id="KW-0436">Ligase</keyword>
<keyword id="KW-0547">Nucleotide-binding</keyword>
<keyword id="KW-0648">Protein biosynthesis</keyword>
<keyword id="KW-1185">Reference proteome</keyword>
<protein>
    <recommendedName>
        <fullName>Glutamyl-tRNA(Gln) amidotransferase subunit C</fullName>
        <shortName>Glu-ADT subunit C</shortName>
        <ecNumber evidence="1">6.3.5.-</ecNumber>
    </recommendedName>
</protein>
<organism>
    <name type="scientific">Sulfurisphaera tokodaii (strain DSM 16993 / JCM 10545 / NBRC 100140 / 7)</name>
    <name type="common">Sulfolobus tokodaii</name>
    <dbReference type="NCBI Taxonomy" id="273063"/>
    <lineage>
        <taxon>Archaea</taxon>
        <taxon>Thermoproteota</taxon>
        <taxon>Thermoprotei</taxon>
        <taxon>Sulfolobales</taxon>
        <taxon>Sulfolobaceae</taxon>
        <taxon>Sulfurisphaera</taxon>
    </lineage>
</organism>
<accession>Q971U4</accession>
<proteinExistence type="inferred from homology"/>
<dbReference type="EC" id="6.3.5.-" evidence="1"/>
<dbReference type="EMBL" id="BA000023">
    <property type="protein sequence ID" value="BAB66326.1"/>
    <property type="molecule type" value="Genomic_DNA"/>
</dbReference>
<dbReference type="RefSeq" id="WP_010979304.1">
    <property type="nucleotide sequence ID" value="NC_003106.2"/>
</dbReference>
<dbReference type="SMR" id="Q971U4"/>
<dbReference type="STRING" id="273063.STK_12835"/>
<dbReference type="GeneID" id="95642474"/>
<dbReference type="KEGG" id="sto:STK_12835"/>
<dbReference type="PATRIC" id="fig|273063.9.peg.1441"/>
<dbReference type="eggNOG" id="arCOG02726">
    <property type="taxonomic scope" value="Archaea"/>
</dbReference>
<dbReference type="OrthoDB" id="35548at2157"/>
<dbReference type="Proteomes" id="UP000001015">
    <property type="component" value="Chromosome"/>
</dbReference>
<dbReference type="GO" id="GO:0050566">
    <property type="term" value="F:asparaginyl-tRNA synthase (glutamine-hydrolyzing) activity"/>
    <property type="evidence" value="ECO:0007669"/>
    <property type="project" value="RHEA"/>
</dbReference>
<dbReference type="GO" id="GO:0005524">
    <property type="term" value="F:ATP binding"/>
    <property type="evidence" value="ECO:0007669"/>
    <property type="project" value="UniProtKB-KW"/>
</dbReference>
<dbReference type="GO" id="GO:0050567">
    <property type="term" value="F:glutaminyl-tRNA synthase (glutamine-hydrolyzing) activity"/>
    <property type="evidence" value="ECO:0007669"/>
    <property type="project" value="UniProtKB-UniRule"/>
</dbReference>
<dbReference type="GO" id="GO:0070681">
    <property type="term" value="P:glutaminyl-tRNAGln biosynthesis via transamidation"/>
    <property type="evidence" value="ECO:0007669"/>
    <property type="project" value="TreeGrafter"/>
</dbReference>
<dbReference type="GO" id="GO:0006450">
    <property type="term" value="P:regulation of translational fidelity"/>
    <property type="evidence" value="ECO:0007669"/>
    <property type="project" value="InterPro"/>
</dbReference>
<dbReference type="GO" id="GO:0006412">
    <property type="term" value="P:translation"/>
    <property type="evidence" value="ECO:0007669"/>
    <property type="project" value="UniProtKB-UniRule"/>
</dbReference>
<dbReference type="Gene3D" id="1.10.20.60">
    <property type="entry name" value="Glu-tRNAGln amidotransferase C subunit, N-terminal domain"/>
    <property type="match status" value="1"/>
</dbReference>
<dbReference type="HAMAP" id="MF_00122">
    <property type="entry name" value="GatC"/>
    <property type="match status" value="1"/>
</dbReference>
<dbReference type="InterPro" id="IPR036113">
    <property type="entry name" value="Asp/Glu-ADT_sf_sub_c"/>
</dbReference>
<dbReference type="InterPro" id="IPR003837">
    <property type="entry name" value="GatC"/>
</dbReference>
<dbReference type="NCBIfam" id="TIGR00135">
    <property type="entry name" value="gatC"/>
    <property type="match status" value="1"/>
</dbReference>
<dbReference type="NCBIfam" id="NF000684">
    <property type="entry name" value="PRK00034.3-4"/>
    <property type="match status" value="1"/>
</dbReference>
<dbReference type="PANTHER" id="PTHR15004">
    <property type="entry name" value="GLUTAMYL-TRNA(GLN) AMIDOTRANSFERASE SUBUNIT C, MITOCHONDRIAL"/>
    <property type="match status" value="1"/>
</dbReference>
<dbReference type="PANTHER" id="PTHR15004:SF0">
    <property type="entry name" value="GLUTAMYL-TRNA(GLN) AMIDOTRANSFERASE SUBUNIT C, MITOCHONDRIAL"/>
    <property type="match status" value="1"/>
</dbReference>
<dbReference type="Pfam" id="PF02686">
    <property type="entry name" value="GatC"/>
    <property type="match status" value="1"/>
</dbReference>
<dbReference type="SUPFAM" id="SSF141000">
    <property type="entry name" value="Glu-tRNAGln amidotransferase C subunit"/>
    <property type="match status" value="1"/>
</dbReference>